<proteinExistence type="inferred from homology"/>
<evidence type="ECO:0000255" key="1">
    <source>
        <dbReference type="HAMAP-Rule" id="MF_00259"/>
    </source>
</evidence>
<dbReference type="EC" id="2.1.2.10" evidence="1"/>
<dbReference type="EMBL" id="CP000108">
    <property type="protein sequence ID" value="ABB28908.1"/>
    <property type="molecule type" value="Genomic_DNA"/>
</dbReference>
<dbReference type="SMR" id="Q3AQ17"/>
<dbReference type="STRING" id="340177.Cag_1656"/>
<dbReference type="KEGG" id="cch:Cag_1656"/>
<dbReference type="eggNOG" id="COG0404">
    <property type="taxonomic scope" value="Bacteria"/>
</dbReference>
<dbReference type="HOGENOM" id="CLU_007884_10_2_10"/>
<dbReference type="OrthoDB" id="9774591at2"/>
<dbReference type="GO" id="GO:0005960">
    <property type="term" value="C:glycine cleavage complex"/>
    <property type="evidence" value="ECO:0007669"/>
    <property type="project" value="InterPro"/>
</dbReference>
<dbReference type="GO" id="GO:0004047">
    <property type="term" value="F:aminomethyltransferase activity"/>
    <property type="evidence" value="ECO:0007669"/>
    <property type="project" value="UniProtKB-UniRule"/>
</dbReference>
<dbReference type="GO" id="GO:0008483">
    <property type="term" value="F:transaminase activity"/>
    <property type="evidence" value="ECO:0007669"/>
    <property type="project" value="UniProtKB-KW"/>
</dbReference>
<dbReference type="GO" id="GO:0019464">
    <property type="term" value="P:glycine decarboxylation via glycine cleavage system"/>
    <property type="evidence" value="ECO:0007669"/>
    <property type="project" value="UniProtKB-UniRule"/>
</dbReference>
<dbReference type="FunFam" id="3.30.70.1400:FF:000001">
    <property type="entry name" value="Aminomethyltransferase"/>
    <property type="match status" value="1"/>
</dbReference>
<dbReference type="Gene3D" id="2.40.30.110">
    <property type="entry name" value="Aminomethyltransferase beta-barrel domains"/>
    <property type="match status" value="1"/>
</dbReference>
<dbReference type="Gene3D" id="3.30.70.1400">
    <property type="entry name" value="Aminomethyltransferase beta-barrel domains"/>
    <property type="match status" value="1"/>
</dbReference>
<dbReference type="Gene3D" id="4.10.1250.10">
    <property type="entry name" value="Aminomethyltransferase fragment"/>
    <property type="match status" value="1"/>
</dbReference>
<dbReference type="Gene3D" id="3.30.1360.120">
    <property type="entry name" value="Probable tRNA modification gtpase trme, domain 1"/>
    <property type="match status" value="1"/>
</dbReference>
<dbReference type="HAMAP" id="MF_00259">
    <property type="entry name" value="GcvT"/>
    <property type="match status" value="1"/>
</dbReference>
<dbReference type="InterPro" id="IPR006223">
    <property type="entry name" value="GCS_T"/>
</dbReference>
<dbReference type="InterPro" id="IPR022903">
    <property type="entry name" value="GCS_T_bac"/>
</dbReference>
<dbReference type="InterPro" id="IPR013977">
    <property type="entry name" value="GCST_C"/>
</dbReference>
<dbReference type="InterPro" id="IPR006222">
    <property type="entry name" value="GCV_T_N"/>
</dbReference>
<dbReference type="InterPro" id="IPR028896">
    <property type="entry name" value="GcvT/YgfZ/DmdA"/>
</dbReference>
<dbReference type="InterPro" id="IPR029043">
    <property type="entry name" value="GcvT/YgfZ_C"/>
</dbReference>
<dbReference type="InterPro" id="IPR027266">
    <property type="entry name" value="TrmE/GcvT_dom1"/>
</dbReference>
<dbReference type="NCBIfam" id="TIGR00528">
    <property type="entry name" value="gcvT"/>
    <property type="match status" value="1"/>
</dbReference>
<dbReference type="NCBIfam" id="NF001567">
    <property type="entry name" value="PRK00389.1"/>
    <property type="match status" value="1"/>
</dbReference>
<dbReference type="PANTHER" id="PTHR43757">
    <property type="entry name" value="AMINOMETHYLTRANSFERASE"/>
    <property type="match status" value="1"/>
</dbReference>
<dbReference type="PANTHER" id="PTHR43757:SF2">
    <property type="entry name" value="AMINOMETHYLTRANSFERASE, MITOCHONDRIAL"/>
    <property type="match status" value="1"/>
</dbReference>
<dbReference type="Pfam" id="PF01571">
    <property type="entry name" value="GCV_T"/>
    <property type="match status" value="1"/>
</dbReference>
<dbReference type="Pfam" id="PF08669">
    <property type="entry name" value="GCV_T_C"/>
    <property type="match status" value="1"/>
</dbReference>
<dbReference type="PIRSF" id="PIRSF006487">
    <property type="entry name" value="GcvT"/>
    <property type="match status" value="1"/>
</dbReference>
<dbReference type="SUPFAM" id="SSF101790">
    <property type="entry name" value="Aminomethyltransferase beta-barrel domain"/>
    <property type="match status" value="1"/>
</dbReference>
<dbReference type="SUPFAM" id="SSF103025">
    <property type="entry name" value="Folate-binding domain"/>
    <property type="match status" value="1"/>
</dbReference>
<name>GCST_CHLCH</name>
<gene>
    <name evidence="1" type="primary">gcvT</name>
    <name type="ordered locus">Cag_1656</name>
</gene>
<feature type="chain" id="PRO_1000047654" description="Aminomethyltransferase">
    <location>
        <begin position="1"/>
        <end position="366"/>
    </location>
</feature>
<comment type="function">
    <text evidence="1">The glycine cleavage system catalyzes the degradation of glycine.</text>
</comment>
<comment type="catalytic activity">
    <reaction evidence="1">
        <text>N(6)-[(R)-S(8)-aminomethyldihydrolipoyl]-L-lysyl-[protein] + (6S)-5,6,7,8-tetrahydrofolate = N(6)-[(R)-dihydrolipoyl]-L-lysyl-[protein] + (6R)-5,10-methylene-5,6,7,8-tetrahydrofolate + NH4(+)</text>
        <dbReference type="Rhea" id="RHEA:16945"/>
        <dbReference type="Rhea" id="RHEA-COMP:10475"/>
        <dbReference type="Rhea" id="RHEA-COMP:10492"/>
        <dbReference type="ChEBI" id="CHEBI:15636"/>
        <dbReference type="ChEBI" id="CHEBI:28938"/>
        <dbReference type="ChEBI" id="CHEBI:57453"/>
        <dbReference type="ChEBI" id="CHEBI:83100"/>
        <dbReference type="ChEBI" id="CHEBI:83143"/>
        <dbReference type="EC" id="2.1.2.10"/>
    </reaction>
</comment>
<comment type="subunit">
    <text evidence="1">The glycine cleavage system is composed of four proteins: P, T, L and H.</text>
</comment>
<comment type="similarity">
    <text evidence="1">Belongs to the GcvT family.</text>
</comment>
<keyword id="KW-0032">Aminotransferase</keyword>
<keyword id="KW-0808">Transferase</keyword>
<organism>
    <name type="scientific">Chlorobium chlorochromatii (strain CaD3)</name>
    <dbReference type="NCBI Taxonomy" id="340177"/>
    <lineage>
        <taxon>Bacteria</taxon>
        <taxon>Pseudomonadati</taxon>
        <taxon>Chlorobiota</taxon>
        <taxon>Chlorobiia</taxon>
        <taxon>Chlorobiales</taxon>
        <taxon>Chlorobiaceae</taxon>
        <taxon>Chlorobium/Pelodictyon group</taxon>
        <taxon>Chlorobium</taxon>
    </lineage>
</organism>
<protein>
    <recommendedName>
        <fullName evidence="1">Aminomethyltransferase</fullName>
        <ecNumber evidence="1">2.1.2.10</ecNumber>
    </recommendedName>
    <alternativeName>
        <fullName evidence="1">Glycine cleavage system T protein</fullName>
    </alternativeName>
</protein>
<sequence>MKKTALYPCHEQSGAKIIDFGGYLMPVQYAGIIAEHKAVRSAAGLFDVSHMGNFFVKGSRALEFLQFVTTNDLAKVVDGQAQYNLMLYPSGGIVDDLIIYRMSADTFFLIVNASNADKDFAWLQQHIDQFEGVTLEDHTERLSLIALQGPLALSILNRLFPSIDGEALGSFHFCSASFNGFDVIIARTGYTGEKGVEMCVPNEAAIALWEALMAAGAADGIQPIGLGARDTLRLEMGYSLYGHEINQDTNPLEARLKWVVKMDKGHFIGKEACEQAMQHPQRTVIGFSLEGRALPRQGFTLYNSDRQAIGVVCSGTLSPTLQEPVGTCSVLREYGKPGTPILVEVRGAFHAGIIRSLPFVTNTSLA</sequence>
<reference key="1">
    <citation type="submission" date="2005-08" db="EMBL/GenBank/DDBJ databases">
        <title>Complete sequence of Chlorobium chlorochromatii CaD3.</title>
        <authorList>
            <consortium name="US DOE Joint Genome Institute"/>
            <person name="Copeland A."/>
            <person name="Lucas S."/>
            <person name="Lapidus A."/>
            <person name="Barry K."/>
            <person name="Detter J.C."/>
            <person name="Glavina T."/>
            <person name="Hammon N."/>
            <person name="Israni S."/>
            <person name="Pitluck S."/>
            <person name="Bryant D."/>
            <person name="Schmutz J."/>
            <person name="Larimer F."/>
            <person name="Land M."/>
            <person name="Kyrpides N."/>
            <person name="Ivanova N."/>
            <person name="Richardson P."/>
        </authorList>
    </citation>
    <scope>NUCLEOTIDE SEQUENCE [LARGE SCALE GENOMIC DNA]</scope>
    <source>
        <strain>CaD3</strain>
    </source>
</reference>
<accession>Q3AQ17</accession>